<sequence>MGQNLSTSNPLGFFPEHQLDPAFKANTNNPDWDFNPNKDNWPKANEVGVGAFGPGLTPPHGGLLGWSPQAQGIITTVPANPPPASTNRQSGRKPTPISPPLRDTHPQAMHWNSTTFHQALQDPRVRGLYFPAGGSSSGTAYPVPDTASHISSIFSRTGDPAPNMESITSGFLGPLLVLQAGFFLLTKILTIPQSLDSWWTSLNFLGGAPVCLGQNSQSPTSNHSPTSCPPICPGYRWMCLRRFIIFLFILLLCLIFLLVLLDYQGMLPVCPLIPGSTTTSTGPCKTCTTTAQGTSLYPSCCCTKPSDGNCTCIPIPSSWAFAKFLWEWASVRFSWLSLLAPFVQWFAGLSPTVWLSVIWMMWYWGPNLYNILSPFIPLLPIFFCLWVYI</sequence>
<protein>
    <recommendedName>
        <fullName evidence="3">Large envelope protein</fullName>
    </recommendedName>
    <alternativeName>
        <fullName evidence="3">L glycoprotein</fullName>
    </alternativeName>
    <alternativeName>
        <fullName evidence="3">L-HBsAg</fullName>
        <shortName evidence="3">LHB</shortName>
    </alternativeName>
    <alternativeName>
        <fullName evidence="3">Large S protein</fullName>
    </alternativeName>
    <alternativeName>
        <fullName evidence="3">Large surface protein</fullName>
    </alternativeName>
    <alternativeName>
        <fullName evidence="3">Major surface antigen</fullName>
    </alternativeName>
</protein>
<organismHost>
    <name type="scientific">Gorilla gorilla</name>
    <name type="common">western gorilla</name>
    <dbReference type="NCBI Taxonomy" id="9593"/>
</organismHost>
<reference key="1">
    <citation type="journal article" date="2000" name="J. Virol.">
        <title>Molecular epidemiology of hepatitis B virus variants in nonhuman primates.</title>
        <authorList>
            <person name="Grethe S."/>
            <person name="Heckel J.O."/>
            <person name="Rietschel W."/>
            <person name="Hufert F.T."/>
        </authorList>
    </citation>
    <scope>NUCLEOTIDE SEQUENCE [GENOMIC DNA]</scope>
</reference>
<reference key="2">
    <citation type="journal article" date="1996" name="Intervirology">
        <title>Functions of the large hepatitis B virus surface protein in viral particle morphogenesis.</title>
        <authorList>
            <person name="Bruss V."/>
            <person name="Gerhardt E."/>
            <person name="Vieluf K."/>
            <person name="Wunderlich G."/>
        </authorList>
    </citation>
    <scope>REVIEW</scope>
</reference>
<reference key="3">
    <citation type="journal article" date="1998" name="Adv. Exp. Med. Biol.">
        <title>Role of glycan processing in hepatitis B virus envelope protein trafficking.</title>
        <authorList>
            <person name="Block T.M."/>
            <person name="Lu X."/>
            <person name="Mehta A."/>
            <person name="Park J."/>
            <person name="Blumberg B.S."/>
            <person name="Dwek R."/>
        </authorList>
    </citation>
    <scope>REVIEW</scope>
</reference>
<reference key="4">
    <citation type="journal article" date="2004" name="Virus Res.">
        <title>Envelopment of the hepatitis B virus nucleocapsid.</title>
        <authorList>
            <person name="Bruss V."/>
        </authorList>
    </citation>
    <scope>REVIEW</scope>
</reference>
<reference key="5">
    <citation type="journal article" date="2006" name="Cancer Sci.">
        <title>Hepatitis B virus pre-S mutants, endoplasmic reticulum stress and hepatocarcinogenesis.</title>
        <authorList>
            <person name="Wang H.C."/>
            <person name="Huang W."/>
            <person name="Lai M.D."/>
            <person name="Su I.J."/>
        </authorList>
    </citation>
    <scope>REVIEW</scope>
</reference>
<feature type="initiator methionine" description="Removed; by host" evidence="3">
    <location>
        <position position="1"/>
    </location>
</feature>
<feature type="chain" id="PRO_0000319292" description="Large envelope protein" evidence="3">
    <location>
        <begin position="2"/>
        <end position="389"/>
    </location>
</feature>
<feature type="topological domain" description="Intravirion; in internal conformation" evidence="3">
    <location>
        <begin position="2"/>
        <end position="242"/>
    </location>
</feature>
<feature type="topological domain" description="Virion surface; in external conformation" evidence="3">
    <location>
        <begin position="2"/>
        <end position="170"/>
    </location>
</feature>
<feature type="transmembrane region" description="Helical; Name=TM1; Note=In external conformation" evidence="3">
    <location>
        <begin position="171"/>
        <end position="191"/>
    </location>
</feature>
<feature type="topological domain" description="Intravirion; in external conformation" evidence="3">
    <location>
        <begin position="192"/>
        <end position="242"/>
    </location>
</feature>
<feature type="transmembrane region" description="Helical; Name=TM2" evidence="3">
    <location>
        <begin position="243"/>
        <end position="263"/>
    </location>
</feature>
<feature type="topological domain" description="Virion surface" evidence="3">
    <location>
        <begin position="264"/>
        <end position="337"/>
    </location>
</feature>
<feature type="transmembrane region" description="Helical" evidence="3">
    <location>
        <begin position="338"/>
        <end position="358"/>
    </location>
</feature>
<feature type="topological domain" description="Intravirion" evidence="3">
    <location>
        <begin position="359"/>
        <end position="364"/>
    </location>
</feature>
<feature type="transmembrane region" description="Helical; Name=TM3" evidence="3">
    <location>
        <begin position="365"/>
        <end position="387"/>
    </location>
</feature>
<feature type="topological domain" description="Virion surface" evidence="3">
    <location>
        <begin position="388"/>
        <end position="389"/>
    </location>
</feature>
<feature type="region of interest" description="Pre-S" evidence="3">
    <location>
        <begin position="2"/>
        <end position="163"/>
    </location>
</feature>
<feature type="region of interest" description="Pre-S1" evidence="3">
    <location>
        <begin position="2"/>
        <end position="108"/>
    </location>
</feature>
<feature type="region of interest" description="Disordered" evidence="4">
    <location>
        <begin position="73"/>
        <end position="99"/>
    </location>
</feature>
<feature type="region of interest" description="Pre-S2" evidence="3">
    <location>
        <begin position="109"/>
        <end position="163"/>
    </location>
</feature>
<feature type="lipid moiety-binding region" description="N-myristoyl glycine; by host" evidence="3">
    <location>
        <position position="2"/>
    </location>
</feature>
<feature type="glycosylation site" description="N-linked (GlcNAc...) asparagine; by host" evidence="3">
    <location>
        <position position="309"/>
    </location>
</feature>
<feature type="splice variant" id="VSP_031466" description="In isoform S." evidence="5">
    <location>
        <begin position="1"/>
        <end position="163"/>
    </location>
</feature>
<feature type="splice variant" id="VSP_031467" description="In isoform M." evidence="5">
    <location>
        <begin position="1"/>
        <end position="108"/>
    </location>
</feature>
<feature type="modified residue" description="N-acetylmethionine" evidence="1">
    <location sequence="Q9WKC4-2">
        <position position="1"/>
    </location>
</feature>
<dbReference type="EMBL" id="AJ131567">
    <property type="protein sequence ID" value="CAA10423.1"/>
    <property type="molecule type" value="Genomic_DNA"/>
</dbReference>
<dbReference type="PIR" id="JQ2088">
    <property type="entry name" value="JQ2088"/>
</dbReference>
<dbReference type="SMR" id="Q9WKC4"/>
<dbReference type="GlyCosmos" id="Q9WKC4">
    <property type="glycosylation" value="1 site, No reported glycans"/>
</dbReference>
<dbReference type="Proteomes" id="UP000007535">
    <property type="component" value="Segment"/>
</dbReference>
<dbReference type="GO" id="GO:0016020">
    <property type="term" value="C:membrane"/>
    <property type="evidence" value="ECO:0007669"/>
    <property type="project" value="UniProtKB-UniRule"/>
</dbReference>
<dbReference type="GO" id="GO:0019031">
    <property type="term" value="C:viral envelope"/>
    <property type="evidence" value="ECO:0007669"/>
    <property type="project" value="UniProtKB-KW"/>
</dbReference>
<dbReference type="GO" id="GO:0055036">
    <property type="term" value="C:virion membrane"/>
    <property type="evidence" value="ECO:0007669"/>
    <property type="project" value="UniProtKB-SubCell"/>
</dbReference>
<dbReference type="GO" id="GO:0075513">
    <property type="term" value="P:caveolin-mediated endocytosis of virus by host cell"/>
    <property type="evidence" value="ECO:0007669"/>
    <property type="project" value="UniProtKB-KW"/>
</dbReference>
<dbReference type="GO" id="GO:0039654">
    <property type="term" value="P:fusion of virus membrane with host endosome membrane"/>
    <property type="evidence" value="ECO:0007669"/>
    <property type="project" value="UniProtKB-KW"/>
</dbReference>
<dbReference type="GO" id="GO:0019062">
    <property type="term" value="P:virion attachment to host cell"/>
    <property type="evidence" value="ECO:0007669"/>
    <property type="project" value="UniProtKB-UniRule"/>
</dbReference>
<dbReference type="HAMAP" id="MF_04075">
    <property type="entry name" value="HBV_HBSAG"/>
    <property type="match status" value="1"/>
</dbReference>
<dbReference type="InterPro" id="IPR000349">
    <property type="entry name" value="HBV_HBSAG"/>
</dbReference>
<dbReference type="Pfam" id="PF00695">
    <property type="entry name" value="vMSA"/>
    <property type="match status" value="1"/>
</dbReference>
<organism>
    <name type="scientific">Gorilla hepatitis B virus (isolate Cameroon/gor97)</name>
    <name type="common">HBVgor</name>
    <dbReference type="NCBI Taxonomy" id="489546"/>
    <lineage>
        <taxon>Viruses</taxon>
        <taxon>Riboviria</taxon>
        <taxon>Pararnavirae</taxon>
        <taxon>Artverviricota</taxon>
        <taxon>Revtraviricetes</taxon>
        <taxon>Blubervirales</taxon>
        <taxon>Hepadnaviridae</taxon>
        <taxon>Orthohepadnavirus</taxon>
        <taxon>Hepatitis B virus</taxon>
    </lineage>
</organism>
<comment type="function">
    <text evidence="3">The large envelope protein exists in two topological conformations, one which is termed 'external' or Le-HBsAg and the other 'internal' or Li-HBsAg. In its external conformation the protein attaches the virus to cell receptors and thereby initiating infection. This interaction determines the species specificity and liver tropism. This attachment induces virion internalization predominantly through caveolin-mediated endocytosis. The large envelope protein also assures fusion between virion membrane and endosomal membrane. In its internal conformation the protein plays a role in virion morphogenesis and mediates the contact with the nucleocapsid like a matrix protein.</text>
</comment>
<comment type="function">
    <text evidence="3">The middle envelope protein plays an important role in the budding of the virion. It is involved in the induction of budding in a nucleocapsid independent way. In this process the majority of envelope proteins bud to form subviral lipoprotein particles of 22 nm of diameter that do not contain a nucleocapsid.</text>
</comment>
<comment type="subunit">
    <molecule>Isoform L</molecule>
    <text evidence="2">In its internal form (Li-HBsAg), interacts with the capsid protein and with the isoform S. Interacts with host chaperone CANX.</text>
</comment>
<comment type="subunit">
    <molecule>Isoform M</molecule>
    <text evidence="2">Associates with host chaperone CANX through its pre-S2 N glycan; this association may be essential for isoform M proper secretion.</text>
</comment>
<comment type="subunit">
    <molecule>Isoform S</molecule>
    <text evidence="2">Interacts with isoform L. Interacts with the antigens of satellite virus HDV (HDVAgs); this interaction is required for encapsidation of HDV genomic RNA.</text>
</comment>
<comment type="subcellular location">
    <subcellularLocation>
        <location evidence="3">Virion membrane</location>
    </subcellularLocation>
</comment>
<comment type="alternative products">
    <event type="alternative splicing"/>
    <event type="alternative initiation"/>
    <isoform>
        <id>Q9WKC4-1</id>
        <name>L</name>
        <name>Large envelope protein</name>
        <name>LHB</name>
        <name>L-HBsAg</name>
        <sequence type="displayed"/>
    </isoform>
    <isoform>
        <id>Q9WKC4-2</id>
        <name>M</name>
        <name>Middle envelope protein</name>
        <name>MHB</name>
        <name>M-HBsAg</name>
        <sequence type="described" ref="VSP_031467"/>
    </isoform>
    <isoform>
        <id>Q9WKC4-3</id>
        <name>S</name>
        <name>Small envelope protein</name>
        <name>SHB</name>
        <name>S-HBsAg</name>
        <sequence type="described" ref="VSP_031466"/>
    </isoform>
</comment>
<comment type="domain">
    <text evidence="3">The large envelope protein is synthesized with the pre-S region at the cytosolic side of the endoplasmic reticulum and, hence will be within the virion after budding. Therefore the pre-S region is not N-glycosylated. Later a post-translational translocation of N-terminal pre-S and TM1 domains occur in about 50% of proteins at the virion surface. These molecules change their topology by an unknown mechanism, resulting in exposure of pre-S region at virion surface. For isoform M in contrast, the pre-S2 region is translocated cotranslationally to the endoplasmic reticulum lumen and is N-glycosylated.</text>
</comment>
<comment type="PTM">
    <text evidence="1 3">Isoform M is N-terminally acetylated by host at a ratio of 90%, and N-glycosylated by host at the pre-S2 region.</text>
</comment>
<comment type="PTM">
    <text evidence="3">Myristoylated.</text>
</comment>
<comment type="similarity">
    <text evidence="3">Belongs to the orthohepadnavirus major surface antigen family.</text>
</comment>
<proteinExistence type="inferred from homology"/>
<keyword id="KW-0007">Acetylation</keyword>
<keyword id="KW-0024">Alternative initiation</keyword>
<keyword id="KW-0025">Alternative splicing</keyword>
<keyword id="KW-1166">Caveolin-mediated endocytosis of virus by host</keyword>
<keyword id="KW-1170">Fusion of virus membrane with host endosomal membrane</keyword>
<keyword id="KW-1168">Fusion of virus membrane with host membrane</keyword>
<keyword id="KW-0325">Glycoprotein</keyword>
<keyword id="KW-0945">Host-virus interaction</keyword>
<keyword id="KW-0449">Lipoprotein</keyword>
<keyword id="KW-0472">Membrane</keyword>
<keyword id="KW-0519">Myristate</keyword>
<keyword id="KW-0812">Transmembrane</keyword>
<keyword id="KW-1133">Transmembrane helix</keyword>
<keyword id="KW-1161">Viral attachment to host cell</keyword>
<keyword id="KW-0261">Viral envelope protein</keyword>
<keyword id="KW-1162">Viral penetration into host cytoplasm</keyword>
<keyword id="KW-0946">Virion</keyword>
<keyword id="KW-1164">Virus endocytosis by host</keyword>
<keyword id="KW-1160">Virus entry into host cell</keyword>
<evidence type="ECO:0000250" key="1">
    <source>
        <dbReference type="UniProtKB" id="P03138"/>
    </source>
</evidence>
<evidence type="ECO:0000250" key="2">
    <source>
        <dbReference type="UniProtKB" id="P03141"/>
    </source>
</evidence>
<evidence type="ECO:0000255" key="3">
    <source>
        <dbReference type="HAMAP-Rule" id="MF_04075"/>
    </source>
</evidence>
<evidence type="ECO:0000256" key="4">
    <source>
        <dbReference type="SAM" id="MobiDB-lite"/>
    </source>
</evidence>
<evidence type="ECO:0000305" key="5"/>
<name>HBSAG_HBVGO</name>
<accession>Q9WKC4</accession>
<gene>
    <name evidence="3" type="primary">S</name>
</gene>